<comment type="function">
    <text evidence="1">Catalyzes the formation of pyridoxal 5'-phosphate from ribose 5-phosphate (RBP), glyceraldehyde 3-phosphate (G3P) and ammonia. The ammonia is provided by the PdxT subunit. Can also use ribulose 5-phosphate and dihydroxyacetone phosphate as substrates, resulting from enzyme-catalyzed isomerization of RBP and G3P, respectively.</text>
</comment>
<comment type="catalytic activity">
    <reaction evidence="1">
        <text>aldehydo-D-ribose 5-phosphate + D-glyceraldehyde 3-phosphate + L-glutamine = pyridoxal 5'-phosphate + L-glutamate + phosphate + 3 H2O + H(+)</text>
        <dbReference type="Rhea" id="RHEA:31507"/>
        <dbReference type="ChEBI" id="CHEBI:15377"/>
        <dbReference type="ChEBI" id="CHEBI:15378"/>
        <dbReference type="ChEBI" id="CHEBI:29985"/>
        <dbReference type="ChEBI" id="CHEBI:43474"/>
        <dbReference type="ChEBI" id="CHEBI:58273"/>
        <dbReference type="ChEBI" id="CHEBI:58359"/>
        <dbReference type="ChEBI" id="CHEBI:59776"/>
        <dbReference type="ChEBI" id="CHEBI:597326"/>
        <dbReference type="EC" id="4.3.3.6"/>
    </reaction>
</comment>
<comment type="pathway">
    <text evidence="1">Cofactor biosynthesis; pyridoxal 5'-phosphate biosynthesis.</text>
</comment>
<comment type="subunit">
    <text evidence="1">In the presence of PdxT, forms a dodecamer of heterodimers.</text>
</comment>
<comment type="similarity">
    <text evidence="1">Belongs to the PdxS/SNZ family.</text>
</comment>
<proteinExistence type="inferred from homology"/>
<accession>O26762</accession>
<name>PDXS_METTH</name>
<dbReference type="EC" id="4.3.3.6" evidence="1"/>
<dbReference type="EMBL" id="AE000666">
    <property type="protein sequence ID" value="AAB85171.1"/>
    <property type="molecule type" value="Genomic_DNA"/>
</dbReference>
<dbReference type="PIR" id="F69188">
    <property type="entry name" value="F69188"/>
</dbReference>
<dbReference type="RefSeq" id="WP_010876304.1">
    <property type="nucleotide sequence ID" value="NC_000916.1"/>
</dbReference>
<dbReference type="SMR" id="O26762"/>
<dbReference type="FunCoup" id="O26762">
    <property type="interactions" value="159"/>
</dbReference>
<dbReference type="STRING" id="187420.MTH_666"/>
<dbReference type="PaxDb" id="187420-MTH_666"/>
<dbReference type="EnsemblBacteria" id="AAB85171">
    <property type="protein sequence ID" value="AAB85171"/>
    <property type="gene ID" value="MTH_666"/>
</dbReference>
<dbReference type="GeneID" id="82297124"/>
<dbReference type="KEGG" id="mth:MTH_666"/>
<dbReference type="PATRIC" id="fig|187420.15.peg.647"/>
<dbReference type="HOGENOM" id="CLU_055352_1_0_2"/>
<dbReference type="InParanoid" id="O26762"/>
<dbReference type="UniPathway" id="UPA00245"/>
<dbReference type="Proteomes" id="UP000005223">
    <property type="component" value="Chromosome"/>
</dbReference>
<dbReference type="GO" id="GO:0036381">
    <property type="term" value="F:pyridoxal 5'-phosphate synthase (glutamine hydrolysing) activity"/>
    <property type="evidence" value="ECO:0007669"/>
    <property type="project" value="UniProtKB-UniRule"/>
</dbReference>
<dbReference type="GO" id="GO:0006520">
    <property type="term" value="P:amino acid metabolic process"/>
    <property type="evidence" value="ECO:0007669"/>
    <property type="project" value="TreeGrafter"/>
</dbReference>
<dbReference type="GO" id="GO:0042823">
    <property type="term" value="P:pyridoxal phosphate biosynthetic process"/>
    <property type="evidence" value="ECO:0007669"/>
    <property type="project" value="UniProtKB-UniRule"/>
</dbReference>
<dbReference type="GO" id="GO:0008615">
    <property type="term" value="P:pyridoxine biosynthetic process"/>
    <property type="evidence" value="ECO:0007669"/>
    <property type="project" value="TreeGrafter"/>
</dbReference>
<dbReference type="CDD" id="cd04727">
    <property type="entry name" value="pdxS"/>
    <property type="match status" value="1"/>
</dbReference>
<dbReference type="FunFam" id="3.20.20.70:FF:000001">
    <property type="entry name" value="Pyridoxine biosynthesis protein PDX1"/>
    <property type="match status" value="1"/>
</dbReference>
<dbReference type="Gene3D" id="3.20.20.70">
    <property type="entry name" value="Aldolase class I"/>
    <property type="match status" value="1"/>
</dbReference>
<dbReference type="HAMAP" id="MF_01824">
    <property type="entry name" value="PdxS"/>
    <property type="match status" value="1"/>
</dbReference>
<dbReference type="InterPro" id="IPR013785">
    <property type="entry name" value="Aldolase_TIM"/>
</dbReference>
<dbReference type="InterPro" id="IPR001852">
    <property type="entry name" value="PdxS/SNZ"/>
</dbReference>
<dbReference type="InterPro" id="IPR033755">
    <property type="entry name" value="PdxS/SNZ_N"/>
</dbReference>
<dbReference type="InterPro" id="IPR011060">
    <property type="entry name" value="RibuloseP-bd_barrel"/>
</dbReference>
<dbReference type="NCBIfam" id="NF003215">
    <property type="entry name" value="PRK04180.1"/>
    <property type="match status" value="1"/>
</dbReference>
<dbReference type="NCBIfam" id="TIGR00343">
    <property type="entry name" value="pyridoxal 5'-phosphate synthase lyase subunit PdxS"/>
    <property type="match status" value="1"/>
</dbReference>
<dbReference type="PANTHER" id="PTHR31829">
    <property type="entry name" value="PYRIDOXAL 5'-PHOSPHATE SYNTHASE SUBUNIT SNZ1-RELATED"/>
    <property type="match status" value="1"/>
</dbReference>
<dbReference type="PANTHER" id="PTHR31829:SF0">
    <property type="entry name" value="PYRIDOXAL 5'-PHOSPHATE SYNTHASE SUBUNIT SNZ1-RELATED"/>
    <property type="match status" value="1"/>
</dbReference>
<dbReference type="Pfam" id="PF01680">
    <property type="entry name" value="SOR_SNZ"/>
    <property type="match status" value="1"/>
</dbReference>
<dbReference type="PIRSF" id="PIRSF029271">
    <property type="entry name" value="Pdx1"/>
    <property type="match status" value="1"/>
</dbReference>
<dbReference type="SUPFAM" id="SSF51366">
    <property type="entry name" value="Ribulose-phoshate binding barrel"/>
    <property type="match status" value="1"/>
</dbReference>
<dbReference type="PROSITE" id="PS01235">
    <property type="entry name" value="PDXS_SNZ_1"/>
    <property type="match status" value="1"/>
</dbReference>
<dbReference type="PROSITE" id="PS51129">
    <property type="entry name" value="PDXS_SNZ_2"/>
    <property type="match status" value="1"/>
</dbReference>
<feature type="chain" id="PRO_0000109439" description="Pyridoxal 5'-phosphate synthase subunit PdxS">
    <location>
        <begin position="1"/>
        <end position="293"/>
    </location>
</feature>
<feature type="active site" description="Schiff-base intermediate with D-ribose 5-phosphate" evidence="1">
    <location>
        <position position="80"/>
    </location>
</feature>
<feature type="binding site" evidence="1">
    <location>
        <position position="23"/>
    </location>
    <ligand>
        <name>D-ribose 5-phosphate</name>
        <dbReference type="ChEBI" id="CHEBI:78346"/>
    </ligand>
</feature>
<feature type="binding site" evidence="1">
    <location>
        <position position="152"/>
    </location>
    <ligand>
        <name>D-ribose 5-phosphate</name>
        <dbReference type="ChEBI" id="CHEBI:78346"/>
    </ligand>
</feature>
<feature type="binding site" evidence="1">
    <location>
        <position position="164"/>
    </location>
    <ligand>
        <name>D-glyceraldehyde 3-phosphate</name>
        <dbReference type="ChEBI" id="CHEBI:59776"/>
    </ligand>
</feature>
<feature type="binding site" evidence="1">
    <location>
        <position position="213"/>
    </location>
    <ligand>
        <name>D-ribose 5-phosphate</name>
        <dbReference type="ChEBI" id="CHEBI:78346"/>
    </ligand>
</feature>
<feature type="binding site" evidence="1">
    <location>
        <begin position="234"/>
        <end position="235"/>
    </location>
    <ligand>
        <name>D-ribose 5-phosphate</name>
        <dbReference type="ChEBI" id="CHEBI:78346"/>
    </ligand>
</feature>
<protein>
    <recommendedName>
        <fullName evidence="1">Pyridoxal 5'-phosphate synthase subunit PdxS</fullName>
        <shortName evidence="1">PLP synthase subunit PdxS</shortName>
        <ecNumber evidence="1">4.3.3.6</ecNumber>
    </recommendedName>
    <alternativeName>
        <fullName evidence="1">Pdx1</fullName>
    </alternativeName>
</protein>
<gene>
    <name evidence="1" type="primary">pdxS</name>
    <name type="ordered locus">MTH_666</name>
</gene>
<sequence length="293" mass="31620">MLHGTEVLKKGFAKMTKGGVIMDVVNAEQAAIAEDSGAVAVMALEKVPADIRASGGVARMADPNKVQEIMDAVSIPVMAKVRIGHFVEAQVLEALGVDMIDESEVLTPADERFHIDKKKFTVPFVCGARNLGEALRRIDEGAAMIRTKGEPGTGNIVEAVRHMRIMMSEIREIQNKEEEELWEVSRKIEAPLELVRETAKLGKLPVVNFAAGGVATPADAALMMQLGADGVFVGSGIFKSDNPEGYARAIVEATAHYDDPEVIAEVSRGLGTAMRGLEISEIPEEGRMQDRGW</sequence>
<reference key="1">
    <citation type="journal article" date="1997" name="J. Bacteriol.">
        <title>Complete genome sequence of Methanobacterium thermoautotrophicum deltaH: functional analysis and comparative genomics.</title>
        <authorList>
            <person name="Smith D.R."/>
            <person name="Doucette-Stamm L.A."/>
            <person name="Deloughery C."/>
            <person name="Lee H.-M."/>
            <person name="Dubois J."/>
            <person name="Aldredge T."/>
            <person name="Bashirzadeh R."/>
            <person name="Blakely D."/>
            <person name="Cook R."/>
            <person name="Gilbert K."/>
            <person name="Harrison D."/>
            <person name="Hoang L."/>
            <person name="Keagle P."/>
            <person name="Lumm W."/>
            <person name="Pothier B."/>
            <person name="Qiu D."/>
            <person name="Spadafora R."/>
            <person name="Vicare R."/>
            <person name="Wang Y."/>
            <person name="Wierzbowski J."/>
            <person name="Gibson R."/>
            <person name="Jiwani N."/>
            <person name="Caruso A."/>
            <person name="Bush D."/>
            <person name="Safer H."/>
            <person name="Patwell D."/>
            <person name="Prabhakar S."/>
            <person name="McDougall S."/>
            <person name="Shimer G."/>
            <person name="Goyal A."/>
            <person name="Pietrovski S."/>
            <person name="Church G.M."/>
            <person name="Daniels C.J."/>
            <person name="Mao J.-I."/>
            <person name="Rice P."/>
            <person name="Noelling J."/>
            <person name="Reeve J.N."/>
        </authorList>
    </citation>
    <scope>NUCLEOTIDE SEQUENCE [LARGE SCALE GENOMIC DNA]</scope>
    <source>
        <strain>ATCC 29096 / DSM 1053 / JCM 10044 / NBRC 100330 / Delta H</strain>
    </source>
</reference>
<organism>
    <name type="scientific">Methanothermobacter thermautotrophicus (strain ATCC 29096 / DSM 1053 / JCM 10044 / NBRC 100330 / Delta H)</name>
    <name type="common">Methanobacterium thermoautotrophicum</name>
    <dbReference type="NCBI Taxonomy" id="187420"/>
    <lineage>
        <taxon>Archaea</taxon>
        <taxon>Methanobacteriati</taxon>
        <taxon>Methanobacteriota</taxon>
        <taxon>Methanomada group</taxon>
        <taxon>Methanobacteria</taxon>
        <taxon>Methanobacteriales</taxon>
        <taxon>Methanobacteriaceae</taxon>
        <taxon>Methanothermobacter</taxon>
    </lineage>
</organism>
<keyword id="KW-0456">Lyase</keyword>
<keyword id="KW-0663">Pyridoxal phosphate</keyword>
<keyword id="KW-1185">Reference proteome</keyword>
<keyword id="KW-0704">Schiff base</keyword>
<evidence type="ECO:0000255" key="1">
    <source>
        <dbReference type="HAMAP-Rule" id="MF_01824"/>
    </source>
</evidence>